<name>M5H43_BOMMX</name>
<reference key="1">
    <citation type="journal article" date="2005" name="Eur. J. Immunol.">
        <title>Variety of antimicrobial peptides in the Bombina maxima toad and evidence of their rapid diversification.</title>
        <authorList>
            <person name="Lee W.-H."/>
            <person name="Li Y."/>
            <person name="Lai R."/>
            <person name="Li S."/>
            <person name="Zhang Y."/>
            <person name="Wang W."/>
        </authorList>
    </citation>
    <scope>NUCLEOTIDE SEQUENCE [MRNA]</scope>
    <scope>AMIDATION AT LEU-143</scope>
    <source>
        <tissue>Skin</tissue>
    </source>
</reference>
<reference key="2">
    <citation type="submission" date="2001-07" db="UniProtKB">
        <title>Isolation and structural characterisation of antimicrobial peptides from the venom of the Chinese large-webbed bell toad (Bombina maxima).</title>
        <authorList>
            <person name="Chen T.B."/>
            <person name="McClean S."/>
            <person name="Orr D.F."/>
            <person name="Bjourson A.J."/>
            <person name="Rao P.F."/>
            <person name="Shaw C."/>
        </authorList>
    </citation>
    <scope>PROTEIN SEQUENCE OF 44-70</scope>
    <scope>FUNCTION OF MAXIMIN-5</scope>
    <scope>SUBCELLULAR LOCATION</scope>
    <scope>TISSUE SPECIFICITY</scope>
    <source>
        <tissue>Skin secretion</tissue>
    </source>
</reference>
<reference key="3">
    <citation type="journal article" date="2002" name="Peptides">
        <title>Antimicrobial peptides from skin secretions of Chinese red belly toad Bombina maxima.</title>
        <authorList>
            <person name="Lai R."/>
            <person name="Zheng Y.-T."/>
            <person name="Shen J.-H."/>
            <person name="Liu G.-J."/>
            <person name="Liu H."/>
            <person name="Lee W.-H."/>
            <person name="Tang S.-Z."/>
            <person name="Zhang Y."/>
        </authorList>
    </citation>
    <scope>PROTEIN SEQUENCE OF 44-70 AND 124-143</scope>
    <scope>AMIDATION AT LEU-143</scope>
    <scope>FUNCTION OF MAXIMIN-5 AND MAXIMIN-H4</scope>
    <scope>MASS SPECTROMETRY</scope>
    <source>
        <tissue>Skin</tissue>
        <tissue>Skin secretion</tissue>
    </source>
</reference>
<accession>Q58T61</accession>
<feature type="signal peptide" evidence="1">
    <location>
        <begin position="1"/>
        <end position="18"/>
    </location>
</feature>
<feature type="propeptide" id="PRO_0000003188">
    <location>
        <begin position="19"/>
        <end position="43"/>
    </location>
</feature>
<feature type="peptide" id="PRO_0000003189" description="Maximin-5">
    <location>
        <begin position="44"/>
        <end position="70"/>
    </location>
</feature>
<feature type="propeptide" id="PRO_0000003190" evidence="2">
    <location>
        <begin position="74"/>
        <end position="123"/>
    </location>
</feature>
<feature type="peptide" id="PRO_0000003191" description="Maximin-H4">
    <location>
        <begin position="124"/>
        <end position="143"/>
    </location>
</feature>
<feature type="modified residue" description="Leucine amide" evidence="2 3">
    <location>
        <position position="143"/>
    </location>
</feature>
<sequence length="144" mass="16240">MNFKYIVAVSFLIASAYARSVQNDEQSLSQRDVLEEESLREIRSIGAKILGGVKTFFKGALKELASTYLQRKRTAEDHEEMKRLEAVMRDLDSLDYPEEASERETRGFNQEEIANLFTKKEKRILGPVISKIGGVLGGLLKNLG</sequence>
<dbReference type="EMBL" id="AY848999">
    <property type="protein sequence ID" value="AAX50220.1"/>
    <property type="molecule type" value="mRNA"/>
</dbReference>
<dbReference type="SMR" id="Q58T61"/>
<dbReference type="GO" id="GO:0005576">
    <property type="term" value="C:extracellular region"/>
    <property type="evidence" value="ECO:0007669"/>
    <property type="project" value="UniProtKB-SubCell"/>
</dbReference>
<dbReference type="GO" id="GO:0042742">
    <property type="term" value="P:defense response to bacterium"/>
    <property type="evidence" value="ECO:0007669"/>
    <property type="project" value="UniProtKB-KW"/>
</dbReference>
<dbReference type="GO" id="GO:0050832">
    <property type="term" value="P:defense response to fungus"/>
    <property type="evidence" value="ECO:0007669"/>
    <property type="project" value="UniProtKB-KW"/>
</dbReference>
<dbReference type="GO" id="GO:0031640">
    <property type="term" value="P:killing of cells of another organism"/>
    <property type="evidence" value="ECO:0007669"/>
    <property type="project" value="UniProtKB-KW"/>
</dbReference>
<dbReference type="InterPro" id="IPR007962">
    <property type="entry name" value="Bombinin"/>
</dbReference>
<dbReference type="Pfam" id="PF05298">
    <property type="entry name" value="Bombinin"/>
    <property type="match status" value="1"/>
</dbReference>
<organism>
    <name type="scientific">Bombina maxima</name>
    <name type="common">Giant fire-bellied toad</name>
    <name type="synonym">Chinese red belly toad</name>
    <dbReference type="NCBI Taxonomy" id="161274"/>
    <lineage>
        <taxon>Eukaryota</taxon>
        <taxon>Metazoa</taxon>
        <taxon>Chordata</taxon>
        <taxon>Craniata</taxon>
        <taxon>Vertebrata</taxon>
        <taxon>Euteleostomi</taxon>
        <taxon>Amphibia</taxon>
        <taxon>Batrachia</taxon>
        <taxon>Anura</taxon>
        <taxon>Bombinatoridae</taxon>
        <taxon>Bombina</taxon>
    </lineage>
</organism>
<comment type="function">
    <text>Maximin-5 shows antibacterial activity against both Gram-positive and Gram-negative bacteria. The only exception is the resistance of E.coli. Also shows antimicrobial activity against fungi C.albicans, A.flavus and P.uticale. It has little hemolytic activity. It does not possess a significant cytotoxicity against tumor cell lines. It does not possess a significant anti-HIV activity.</text>
</comment>
<comment type="function">
    <text>Maximin-H4 shows antibacterial activity against both Gram-positive and Gram-negative bacteria. It also shows antimicrobial activity against the fungus C.albicans. Shows strong hemolytic activity.</text>
</comment>
<comment type="subcellular location">
    <subcellularLocation>
        <location evidence="4">Secreted</location>
    </subcellularLocation>
</comment>
<comment type="tissue specificity">
    <text evidence="4">Expressed by the skin glands.</text>
</comment>
<comment type="mass spectrometry" mass="2841.0" method="FAB" evidence="2">
    <molecule>Maximin-5</molecule>
</comment>
<comment type="mass spectrometry" mass="1960.0" method="FAB" evidence="2">
    <molecule>Maximin-H4</molecule>
</comment>
<comment type="similarity">
    <text evidence="5">Belongs to the bombinin family.</text>
</comment>
<keyword id="KW-0027">Amidation</keyword>
<keyword id="KW-0878">Amphibian defense peptide</keyword>
<keyword id="KW-0044">Antibiotic</keyword>
<keyword id="KW-0929">Antimicrobial</keyword>
<keyword id="KW-0165">Cleavage on pair of basic residues</keyword>
<keyword id="KW-0204">Cytolysis</keyword>
<keyword id="KW-0903">Direct protein sequencing</keyword>
<keyword id="KW-0295">Fungicide</keyword>
<keyword id="KW-0354">Hemolysis</keyword>
<keyword id="KW-0964">Secreted</keyword>
<keyword id="KW-0732">Signal</keyword>
<proteinExistence type="evidence at protein level"/>
<protein>
    <recommendedName>
        <fullName>Maximins 5/H4 type 3</fullName>
    </recommendedName>
    <component>
        <recommendedName>
            <fullName>Maximin-5</fullName>
        </recommendedName>
    </component>
    <component>
        <recommendedName>
            <fullName>Maximin-H4</fullName>
        </recommendedName>
    </component>
</protein>
<evidence type="ECO:0000255" key="1"/>
<evidence type="ECO:0000269" key="2">
    <source>
    </source>
</evidence>
<evidence type="ECO:0000269" key="3">
    <source>
    </source>
</evidence>
<evidence type="ECO:0000269" key="4">
    <source ref="2"/>
</evidence>
<evidence type="ECO:0000305" key="5"/>